<dbReference type="EC" id="6.3.5.3" evidence="1"/>
<dbReference type="EMBL" id="AF275718">
    <property type="protein sequence ID" value="AAF82794.1"/>
    <property type="molecule type" value="Genomic_DNA"/>
</dbReference>
<dbReference type="EMBL" id="HE616890">
    <property type="protein sequence ID" value="CCE96013.1"/>
    <property type="molecule type" value="Genomic_DNA"/>
</dbReference>
<dbReference type="RefSeq" id="WP_014328480.1">
    <property type="nucleotide sequence ID" value="NC_016812.1"/>
</dbReference>
<dbReference type="SMR" id="Q9KH12"/>
<dbReference type="STRING" id="1117943.SFHH103_01516"/>
<dbReference type="KEGG" id="sfh:SFHH103_01516"/>
<dbReference type="PATRIC" id="fig|380.5.peg.1604"/>
<dbReference type="eggNOG" id="COG0046">
    <property type="taxonomic scope" value="Bacteria"/>
</dbReference>
<dbReference type="HOGENOM" id="CLU_003100_0_1_5"/>
<dbReference type="UniPathway" id="UPA00074">
    <property type="reaction ID" value="UER00128"/>
</dbReference>
<dbReference type="Proteomes" id="UP000007735">
    <property type="component" value="Chromosome"/>
</dbReference>
<dbReference type="GO" id="GO:0005737">
    <property type="term" value="C:cytoplasm"/>
    <property type="evidence" value="ECO:0007669"/>
    <property type="project" value="UniProtKB-SubCell"/>
</dbReference>
<dbReference type="GO" id="GO:0005524">
    <property type="term" value="F:ATP binding"/>
    <property type="evidence" value="ECO:0007669"/>
    <property type="project" value="UniProtKB-UniRule"/>
</dbReference>
<dbReference type="GO" id="GO:0000287">
    <property type="term" value="F:magnesium ion binding"/>
    <property type="evidence" value="ECO:0007669"/>
    <property type="project" value="UniProtKB-UniRule"/>
</dbReference>
<dbReference type="GO" id="GO:0004642">
    <property type="term" value="F:phosphoribosylformylglycinamidine synthase activity"/>
    <property type="evidence" value="ECO:0007669"/>
    <property type="project" value="UniProtKB-UniRule"/>
</dbReference>
<dbReference type="GO" id="GO:0006189">
    <property type="term" value="P:'de novo' IMP biosynthetic process"/>
    <property type="evidence" value="ECO:0007669"/>
    <property type="project" value="UniProtKB-UniRule"/>
</dbReference>
<dbReference type="CDD" id="cd02203">
    <property type="entry name" value="PurL_repeat1"/>
    <property type="match status" value="1"/>
</dbReference>
<dbReference type="CDD" id="cd02204">
    <property type="entry name" value="PurL_repeat2"/>
    <property type="match status" value="1"/>
</dbReference>
<dbReference type="FunFam" id="3.30.1330.10:FF:000004">
    <property type="entry name" value="Phosphoribosylformylglycinamidine synthase subunit PurL"/>
    <property type="match status" value="1"/>
</dbReference>
<dbReference type="Gene3D" id="3.90.650.10">
    <property type="entry name" value="PurM-like C-terminal domain"/>
    <property type="match status" value="2"/>
</dbReference>
<dbReference type="Gene3D" id="3.30.1330.10">
    <property type="entry name" value="PurM-like, N-terminal domain"/>
    <property type="match status" value="2"/>
</dbReference>
<dbReference type="HAMAP" id="MF_00420">
    <property type="entry name" value="PurL_2"/>
    <property type="match status" value="1"/>
</dbReference>
<dbReference type="InterPro" id="IPR010074">
    <property type="entry name" value="PRibForGlyAmidine_synth_PurL"/>
</dbReference>
<dbReference type="InterPro" id="IPR041609">
    <property type="entry name" value="PurL_linker"/>
</dbReference>
<dbReference type="InterPro" id="IPR010918">
    <property type="entry name" value="PurM-like_C_dom"/>
</dbReference>
<dbReference type="InterPro" id="IPR036676">
    <property type="entry name" value="PurM-like_C_sf"/>
</dbReference>
<dbReference type="InterPro" id="IPR016188">
    <property type="entry name" value="PurM-like_N"/>
</dbReference>
<dbReference type="InterPro" id="IPR036921">
    <property type="entry name" value="PurM-like_N_sf"/>
</dbReference>
<dbReference type="NCBIfam" id="TIGR01736">
    <property type="entry name" value="FGAM_synth_II"/>
    <property type="match status" value="1"/>
</dbReference>
<dbReference type="NCBIfam" id="NF002290">
    <property type="entry name" value="PRK01213.1"/>
    <property type="match status" value="1"/>
</dbReference>
<dbReference type="PANTHER" id="PTHR43555">
    <property type="entry name" value="PHOSPHORIBOSYLFORMYLGLYCINAMIDINE SYNTHASE SUBUNIT PURL"/>
    <property type="match status" value="1"/>
</dbReference>
<dbReference type="PANTHER" id="PTHR43555:SF1">
    <property type="entry name" value="PHOSPHORIBOSYLFORMYLGLYCINAMIDINE SYNTHASE SUBUNIT PURL"/>
    <property type="match status" value="1"/>
</dbReference>
<dbReference type="Pfam" id="PF00586">
    <property type="entry name" value="AIRS"/>
    <property type="match status" value="2"/>
</dbReference>
<dbReference type="Pfam" id="PF02769">
    <property type="entry name" value="AIRS_C"/>
    <property type="match status" value="2"/>
</dbReference>
<dbReference type="Pfam" id="PF18072">
    <property type="entry name" value="FGAR-AT_linker"/>
    <property type="match status" value="1"/>
</dbReference>
<dbReference type="PIRSF" id="PIRSF001587">
    <property type="entry name" value="FGAM_synthase_II"/>
    <property type="match status" value="1"/>
</dbReference>
<dbReference type="SUPFAM" id="SSF56042">
    <property type="entry name" value="PurM C-terminal domain-like"/>
    <property type="match status" value="2"/>
</dbReference>
<dbReference type="SUPFAM" id="SSF55326">
    <property type="entry name" value="PurM N-terminal domain-like"/>
    <property type="match status" value="2"/>
</dbReference>
<keyword id="KW-0067">ATP-binding</keyword>
<keyword id="KW-0963">Cytoplasm</keyword>
<keyword id="KW-0436">Ligase</keyword>
<keyword id="KW-0460">Magnesium</keyword>
<keyword id="KW-0479">Metal-binding</keyword>
<keyword id="KW-0547">Nucleotide-binding</keyword>
<keyword id="KW-0658">Purine biosynthesis</keyword>
<sequence length="743" mass="79216">MTISNTRPITPELIASHGLKPDEYERILSLIRREPTFTELGIFSAMWNEHCSYKSSKKWLRTLPTKGPRVIQGPGENAGVVDIDDGDCVVFKMESHNHPSYIEPYQGAATGVGGILRDVFTMGARPIAAMNALRFGAPDHPKTRHLVSGVVAGVGGYGNSFGVPTVGGEVEFDARYNGNILVNAFAAGLARSDAIFYSKAEGVGLPVVYLGAKTGRDGVGGATMASAEFDESIEEKRPTVQVGDPFTEKCLLEACLELMQTGAVIAIQDMGAAGLTCSAVEMGAKGDLGIELDLDKVPVREERMTAYEMMLSESQERMLMVLRPEKEEEAKAIFVKWGLDFAIVGKTTDDLRFRILHQGEEVANLPIKELGDEAPEYDRPWTPAKSPSPLATNDIPRADVAEALLKLVGSANNSSRRWVYEQYDTLIQGNSLQLPGGDAGVVRVEGHATKALAFSSDVTPRYVEADPFEGGKQAVAECWRNLTATGALPLAATDNLNFGNPERPEIMSQFVHAIKGIGEACRALDFPIVSGNVSLYNETNGQGILPTPTIGGVGLISDWARMARIRFAAADEAILLAGAPEGWGTHIAQSVYMRDVHGRTDGPAPHVDLAHERKVGDFVRGLIADGLVTAVHDCSSGGLALAVAEMAMASGIGATIEAPAGHDPIAAFYGEDQGRYVVTVTAEKLEAIASRARDAGLSLPVIGTTGGSAVKLGDAKAVSVEELRSTHEAWFPTYMGGDLAPDN</sequence>
<evidence type="ECO:0000255" key="1">
    <source>
        <dbReference type="HAMAP-Rule" id="MF_00420"/>
    </source>
</evidence>
<comment type="function">
    <text evidence="1">Part of the phosphoribosylformylglycinamidine synthase complex involved in the purines biosynthetic pathway. Catalyzes the ATP-dependent conversion of formylglycinamide ribonucleotide (FGAR) and glutamine to yield formylglycinamidine ribonucleotide (FGAM) and glutamate. The FGAM synthase complex is composed of three subunits. PurQ produces an ammonia molecule by converting glutamine to glutamate. PurL transfers the ammonia molecule to FGAR to form FGAM in an ATP-dependent manner. PurS interacts with PurQ and PurL and is thought to assist in the transfer of the ammonia molecule from PurQ to PurL.</text>
</comment>
<comment type="catalytic activity">
    <reaction evidence="1">
        <text>N(2)-formyl-N(1)-(5-phospho-beta-D-ribosyl)glycinamide + L-glutamine + ATP + H2O = 2-formamido-N(1)-(5-O-phospho-beta-D-ribosyl)acetamidine + L-glutamate + ADP + phosphate + H(+)</text>
        <dbReference type="Rhea" id="RHEA:17129"/>
        <dbReference type="ChEBI" id="CHEBI:15377"/>
        <dbReference type="ChEBI" id="CHEBI:15378"/>
        <dbReference type="ChEBI" id="CHEBI:29985"/>
        <dbReference type="ChEBI" id="CHEBI:30616"/>
        <dbReference type="ChEBI" id="CHEBI:43474"/>
        <dbReference type="ChEBI" id="CHEBI:58359"/>
        <dbReference type="ChEBI" id="CHEBI:147286"/>
        <dbReference type="ChEBI" id="CHEBI:147287"/>
        <dbReference type="ChEBI" id="CHEBI:456216"/>
        <dbReference type="EC" id="6.3.5.3"/>
    </reaction>
</comment>
<comment type="pathway">
    <text evidence="1">Purine metabolism; IMP biosynthesis via de novo pathway; 5-amino-1-(5-phospho-D-ribosyl)imidazole from N(2)-formyl-N(1)-(5-phospho-D-ribosyl)glycinamide: step 1/2.</text>
</comment>
<comment type="subunit">
    <text evidence="1">Monomer. Part of the FGAM synthase complex composed of 1 PurL, 1 PurQ and 2 PurS subunits.</text>
</comment>
<comment type="subcellular location">
    <subcellularLocation>
        <location evidence="1">Cytoplasm</location>
    </subcellularLocation>
</comment>
<comment type="similarity">
    <text evidence="1">Belongs to the FGAMS family.</text>
</comment>
<organism>
    <name type="scientific">Sinorhizobium fredii (strain HH103)</name>
    <dbReference type="NCBI Taxonomy" id="1117943"/>
    <lineage>
        <taxon>Bacteria</taxon>
        <taxon>Pseudomonadati</taxon>
        <taxon>Pseudomonadota</taxon>
        <taxon>Alphaproteobacteria</taxon>
        <taxon>Hyphomicrobiales</taxon>
        <taxon>Rhizobiaceae</taxon>
        <taxon>Sinorhizobium/Ensifer group</taxon>
        <taxon>Sinorhizobium</taxon>
    </lineage>
</organism>
<proteinExistence type="inferred from homology"/>
<protein>
    <recommendedName>
        <fullName evidence="1">Phosphoribosylformylglycinamidine synthase subunit PurL</fullName>
        <shortName evidence="1">FGAM synthase</shortName>
        <ecNumber evidence="1">6.3.5.3</ecNumber>
    </recommendedName>
    <alternativeName>
        <fullName evidence="1">Formylglycinamide ribonucleotide amidotransferase subunit II</fullName>
        <shortName evidence="1">FGAR amidotransferase II</shortName>
        <shortName evidence="1">FGAR-AT II</shortName>
    </alternativeName>
    <alternativeName>
        <fullName evidence="1">Glutamine amidotransferase PurL</fullName>
    </alternativeName>
    <alternativeName>
        <fullName evidence="1">Phosphoribosylformylglycinamidine synthase subunit II</fullName>
    </alternativeName>
</protein>
<accession>Q9KH12</accession>
<accession>G9A6Y3</accession>
<name>PURL_SINF1</name>
<reference key="1">
    <citation type="submission" date="2000-06" db="EMBL/GenBank/DDBJ databases">
        <title>The purL gene of Sinorhizobium fredii HH103.</title>
        <authorList>
            <person name="Buendia A.M."/>
            <person name="Ollero F.J."/>
            <person name="Ruiz-Sainz J.E."/>
        </authorList>
    </citation>
    <scope>NUCLEOTIDE SEQUENCE [GENOMIC DNA]</scope>
    <source>
        <strain>HH103</strain>
    </source>
</reference>
<reference key="2">
    <citation type="journal article" date="2012" name="J. Bacteriol.">
        <title>Genome sequence of the soybean symbiont Sinorhizobium fredii HH103.</title>
        <authorList>
            <person name="Weidner S."/>
            <person name="Becker A."/>
            <person name="Bonilla I."/>
            <person name="Jaenicke S."/>
            <person name="Lloret J."/>
            <person name="Margaret I."/>
            <person name="Puhler A."/>
            <person name="Ruiz-Sainz J.E."/>
            <person name="Schneiker-Bekel S."/>
            <person name="Szczepanowski R."/>
            <person name="Vinardell J.M."/>
            <person name="Zehner S."/>
            <person name="Gottfert M."/>
        </authorList>
    </citation>
    <scope>NUCLEOTIDE SEQUENCE [LARGE SCALE GENOMIC DNA]</scope>
    <source>
        <strain>HH103</strain>
    </source>
</reference>
<gene>
    <name evidence="1" type="primary">purL</name>
    <name type="ordered locus">SFHH103_01516</name>
</gene>
<feature type="chain" id="PRO_0000100480" description="Phosphoribosylformylglycinamidine synthase subunit PurL">
    <location>
        <begin position="1"/>
        <end position="743"/>
    </location>
</feature>
<feature type="active site" evidence="1">
    <location>
        <position position="50"/>
    </location>
</feature>
<feature type="active site" description="Proton acceptor" evidence="1">
    <location>
        <position position="96"/>
    </location>
</feature>
<feature type="binding site" evidence="1">
    <location>
        <position position="53"/>
    </location>
    <ligand>
        <name>ATP</name>
        <dbReference type="ChEBI" id="CHEBI:30616"/>
    </ligand>
</feature>
<feature type="binding site" evidence="1">
    <location>
        <position position="92"/>
    </location>
    <ligand>
        <name>ATP</name>
        <dbReference type="ChEBI" id="CHEBI:30616"/>
    </ligand>
</feature>
<feature type="binding site" evidence="1">
    <location>
        <position position="94"/>
    </location>
    <ligand>
        <name>Mg(2+)</name>
        <dbReference type="ChEBI" id="CHEBI:18420"/>
        <label>1</label>
    </ligand>
</feature>
<feature type="binding site" evidence="1">
    <location>
        <begin position="95"/>
        <end position="98"/>
    </location>
    <ligand>
        <name>substrate</name>
    </ligand>
</feature>
<feature type="binding site" evidence="1">
    <location>
        <position position="117"/>
    </location>
    <ligand>
        <name>substrate</name>
    </ligand>
</feature>
<feature type="binding site" evidence="1">
    <location>
        <position position="118"/>
    </location>
    <ligand>
        <name>Mg(2+)</name>
        <dbReference type="ChEBI" id="CHEBI:18420"/>
        <label>2</label>
    </ligand>
</feature>
<feature type="binding site" evidence="1">
    <location>
        <position position="241"/>
    </location>
    <ligand>
        <name>substrate</name>
    </ligand>
</feature>
<feature type="binding site" evidence="1">
    <location>
        <position position="269"/>
    </location>
    <ligand>
        <name>Mg(2+)</name>
        <dbReference type="ChEBI" id="CHEBI:18420"/>
        <label>2</label>
    </ligand>
</feature>
<feature type="binding site" evidence="1">
    <location>
        <begin position="313"/>
        <end position="315"/>
    </location>
    <ligand>
        <name>substrate</name>
    </ligand>
</feature>
<feature type="binding site" evidence="1">
    <location>
        <position position="494"/>
    </location>
    <ligand>
        <name>ATP</name>
        <dbReference type="ChEBI" id="CHEBI:30616"/>
    </ligand>
</feature>
<feature type="binding site" evidence="1">
    <location>
        <position position="531"/>
    </location>
    <ligand>
        <name>ATP</name>
        <dbReference type="ChEBI" id="CHEBI:30616"/>
    </ligand>
</feature>
<feature type="binding site" evidence="1">
    <location>
        <position position="532"/>
    </location>
    <ligand>
        <name>Mg(2+)</name>
        <dbReference type="ChEBI" id="CHEBI:18420"/>
        <label>1</label>
    </ligand>
</feature>
<feature type="binding site" evidence="1">
    <location>
        <position position="534"/>
    </location>
    <ligand>
        <name>substrate</name>
    </ligand>
</feature>